<reference key="1">
    <citation type="journal article" date="2006" name="J. Virol.">
        <title>Prevalence and genetic diversity of coronaviruses in bats from China.</title>
        <authorList>
            <person name="Tang X.C."/>
            <person name="Zhang J.X."/>
            <person name="Zhang S.Y."/>
            <person name="Wang P."/>
            <person name="Fan X.H."/>
            <person name="Li L.F."/>
            <person name="Li G."/>
            <person name="Dong B.Q."/>
            <person name="Liu W."/>
            <person name="Cheung C.L."/>
            <person name="Xu K.M."/>
            <person name="Song W.J."/>
            <person name="Vijaykrishna D."/>
            <person name="Poon L.L.M."/>
            <person name="Peiris J.S.M."/>
            <person name="Smith G.J."/>
            <person name="Chen H."/>
            <person name="Guan Y."/>
        </authorList>
    </citation>
    <scope>NUCLEOTIDE SEQUENCE [GENOMIC RNA]</scope>
</reference>
<proteinExistence type="inferred from homology"/>
<organismHost>
    <name type="scientific">Scotophilus kuhlii</name>
    <name type="common">Lesser asiatic yellow bat</name>
    <dbReference type="NCBI Taxonomy" id="153297"/>
</organismHost>
<accession>Q0Q464</accession>
<name>VEMP_BC512</name>
<keyword id="KW-0053">Apoptosis</keyword>
<keyword id="KW-1040">Host Golgi apparatus</keyword>
<keyword id="KW-1043">Host membrane</keyword>
<keyword id="KW-0472">Membrane</keyword>
<keyword id="KW-0812">Transmembrane</keyword>
<keyword id="KW-1133">Transmembrane helix</keyword>
<gene>
    <name evidence="1" type="primary">E</name>
    <name type="synonym">sM</name>
    <name type="ORF">4</name>
</gene>
<comment type="function">
    <text evidence="1">Plays a central role in virus morphogenesis and assembly. Acts as a viroporin and self-assembles in host membranes forming pentameric protein-lipid pores that allow ion transport. Also plays a role in the induction of apoptosis.</text>
</comment>
<comment type="subunit">
    <text evidence="1">Homopentamer. Interacts with membrane protein M in the budding compartment of the host cell, which is located between endoplasmic reticulum and the Golgi complex. Interacts with Nucleoprotein.</text>
</comment>
<comment type="subcellular location">
    <subcellularLocation>
        <location evidence="1">Host Golgi apparatus membrane</location>
        <topology evidence="1">Single-pass type III membrane protein</topology>
    </subcellularLocation>
    <text evidence="1">The cytoplasmic tail functions as a Golgi complex-targeting signal.</text>
</comment>
<comment type="miscellaneous">
    <text>Bat coronavirus 512/2005 is highly similar to porcine epidemic diarrhea virus (PEDV).</text>
</comment>
<comment type="similarity">
    <text evidence="1">Belongs to the alphacoronaviruses E protein family.</text>
</comment>
<protein>
    <recommendedName>
        <fullName evidence="1">Envelope small membrane protein</fullName>
        <shortName evidence="1">E protein</shortName>
        <shortName evidence="1">sM protein</shortName>
    </recommendedName>
</protein>
<organism>
    <name type="scientific">Bat coronavirus 512/2005</name>
    <name type="common">BtCoV</name>
    <name type="synonym">BtCoV/512/2005</name>
    <dbReference type="NCBI Taxonomy" id="693999"/>
    <lineage>
        <taxon>Viruses</taxon>
        <taxon>Riboviria</taxon>
        <taxon>Orthornavirae</taxon>
        <taxon>Pisuviricota</taxon>
        <taxon>Pisoniviricetes</taxon>
        <taxon>Nidovirales</taxon>
        <taxon>Cornidovirineae</taxon>
        <taxon>Coronaviridae</taxon>
        <taxon>Orthocoronavirinae</taxon>
        <taxon>Alphacoronavirus</taxon>
        <taxon>Pedacovirus</taxon>
        <taxon>Alphacoronavirus scotophili</taxon>
    </lineage>
</organism>
<feature type="chain" id="PRO_0000289932" description="Envelope small membrane protein">
    <location>
        <begin position="1"/>
        <end position="76"/>
    </location>
</feature>
<feature type="topological domain" description="Virion surface" evidence="1">
    <location>
        <begin position="1"/>
        <end position="14"/>
    </location>
</feature>
<feature type="transmembrane region" description="Helical" evidence="1">
    <location>
        <begin position="15"/>
        <end position="35"/>
    </location>
</feature>
<feature type="topological domain" description="Intravirion" evidence="1">
    <location>
        <begin position="36"/>
        <end position="76"/>
    </location>
</feature>
<evidence type="ECO:0000255" key="1">
    <source>
        <dbReference type="HAMAP-Rule" id="MF_04205"/>
    </source>
</evidence>
<sequence>MLQLVNDNGVVVNAILWLFVLFFVLVISITFVQLINLCFTCHRLCNNVVYKPVGKVYGVYKSYMRIQPLTSDIIQV</sequence>
<dbReference type="EMBL" id="DQ648858">
    <property type="protein sequence ID" value="ABG47080.1"/>
    <property type="molecule type" value="Genomic_RNA"/>
</dbReference>
<dbReference type="RefSeq" id="YP_001351686.1">
    <property type="nucleotide sequence ID" value="NC_009657.1"/>
</dbReference>
<dbReference type="KEGG" id="vg:11266520"/>
<dbReference type="Proteomes" id="UP000113079">
    <property type="component" value="Genome"/>
</dbReference>
<dbReference type="GO" id="GO:0044178">
    <property type="term" value="C:host cell Golgi membrane"/>
    <property type="evidence" value="ECO:0007669"/>
    <property type="project" value="UniProtKB-SubCell"/>
</dbReference>
<dbReference type="GO" id="GO:0016020">
    <property type="term" value="C:membrane"/>
    <property type="evidence" value="ECO:0007669"/>
    <property type="project" value="UniProtKB-UniRule"/>
</dbReference>
<dbReference type="GO" id="GO:0140975">
    <property type="term" value="P:disruption of cellular anatomical structure in another organism"/>
    <property type="evidence" value="ECO:0007669"/>
    <property type="project" value="UniProtKB-UniRule"/>
</dbReference>
<dbReference type="GO" id="GO:0046760">
    <property type="term" value="P:viral budding from Golgi membrane"/>
    <property type="evidence" value="ECO:0007669"/>
    <property type="project" value="UniProtKB-UniRule"/>
</dbReference>
<dbReference type="HAMAP" id="MF_04205">
    <property type="entry name" value="ALPHA_CORONA_E"/>
    <property type="match status" value="1"/>
</dbReference>
<dbReference type="InterPro" id="IPR043507">
    <property type="entry name" value="E_protein_aCoV"/>
</dbReference>
<dbReference type="InterPro" id="IPR003873">
    <property type="entry name" value="E_protein_CoV"/>
</dbReference>
<dbReference type="Pfam" id="PF02723">
    <property type="entry name" value="CoV_E"/>
    <property type="match status" value="1"/>
</dbReference>
<dbReference type="PROSITE" id="PS51926">
    <property type="entry name" value="COV_E"/>
    <property type="match status" value="1"/>
</dbReference>